<feature type="chain" id="PRO_1000141527" description="Large ribosomal subunit protein uL2">
    <location>
        <begin position="1"/>
        <end position="277"/>
    </location>
</feature>
<feature type="region of interest" description="Disordered" evidence="2">
    <location>
        <begin position="223"/>
        <end position="261"/>
    </location>
</feature>
<proteinExistence type="inferred from homology"/>
<evidence type="ECO:0000255" key="1">
    <source>
        <dbReference type="HAMAP-Rule" id="MF_01320"/>
    </source>
</evidence>
<evidence type="ECO:0000256" key="2">
    <source>
        <dbReference type="SAM" id="MobiDB-lite"/>
    </source>
</evidence>
<evidence type="ECO:0000305" key="3"/>
<protein>
    <recommendedName>
        <fullName evidence="1">Large ribosomal subunit protein uL2</fullName>
    </recommendedName>
    <alternativeName>
        <fullName evidence="3">50S ribosomal protein L2</fullName>
    </alternativeName>
</protein>
<sequence length="277" mass="30358">MAVKKFNPITPSRRQMTMPTFEEITSQQPEKSLLVSLKSKAGRNAQGKITVRHRGGGVKRKYRIIDFKRNKDSIPAKVATIEYDPNRSAYIALVVYTDGEKRYIIAPAGLKVGDVIVSGPDSDIKPGNALPLKNIPVGTVIHNIELQKGKGGQLVRSAGNSAQLMAKEGNYATLRLPSGEMRYVRIECRATIGTVSNPTNDIVNIGKAGRKRHMGWRPTVRGSVMNPNDHPHGGGEGKSPVGRPSPVTPWGKPALGYKTRKNKKYSDRFIIKGRNAK</sequence>
<dbReference type="EMBL" id="CP001078">
    <property type="protein sequence ID" value="ACD52066.1"/>
    <property type="molecule type" value="Genomic_DNA"/>
</dbReference>
<dbReference type="RefSeq" id="WP_003369139.1">
    <property type="nucleotide sequence ID" value="NC_010723.1"/>
</dbReference>
<dbReference type="SMR" id="B2UYB3"/>
<dbReference type="KEGG" id="cbt:CLH_0240"/>
<dbReference type="HOGENOM" id="CLU_036235_2_1_9"/>
<dbReference type="GO" id="GO:0015934">
    <property type="term" value="C:large ribosomal subunit"/>
    <property type="evidence" value="ECO:0007669"/>
    <property type="project" value="InterPro"/>
</dbReference>
<dbReference type="GO" id="GO:0019843">
    <property type="term" value="F:rRNA binding"/>
    <property type="evidence" value="ECO:0007669"/>
    <property type="project" value="UniProtKB-UniRule"/>
</dbReference>
<dbReference type="GO" id="GO:0003735">
    <property type="term" value="F:structural constituent of ribosome"/>
    <property type="evidence" value="ECO:0007669"/>
    <property type="project" value="InterPro"/>
</dbReference>
<dbReference type="GO" id="GO:0016740">
    <property type="term" value="F:transferase activity"/>
    <property type="evidence" value="ECO:0007669"/>
    <property type="project" value="InterPro"/>
</dbReference>
<dbReference type="GO" id="GO:0002181">
    <property type="term" value="P:cytoplasmic translation"/>
    <property type="evidence" value="ECO:0007669"/>
    <property type="project" value="TreeGrafter"/>
</dbReference>
<dbReference type="FunFam" id="2.30.30.30:FF:000001">
    <property type="entry name" value="50S ribosomal protein L2"/>
    <property type="match status" value="1"/>
</dbReference>
<dbReference type="FunFam" id="2.40.50.140:FF:000003">
    <property type="entry name" value="50S ribosomal protein L2"/>
    <property type="match status" value="1"/>
</dbReference>
<dbReference type="FunFam" id="4.10.950.10:FF:000001">
    <property type="entry name" value="50S ribosomal protein L2"/>
    <property type="match status" value="1"/>
</dbReference>
<dbReference type="Gene3D" id="2.30.30.30">
    <property type="match status" value="1"/>
</dbReference>
<dbReference type="Gene3D" id="2.40.50.140">
    <property type="entry name" value="Nucleic acid-binding proteins"/>
    <property type="match status" value="1"/>
</dbReference>
<dbReference type="Gene3D" id="4.10.950.10">
    <property type="entry name" value="Ribosomal protein L2, domain 3"/>
    <property type="match status" value="1"/>
</dbReference>
<dbReference type="HAMAP" id="MF_01320_B">
    <property type="entry name" value="Ribosomal_uL2_B"/>
    <property type="match status" value="1"/>
</dbReference>
<dbReference type="InterPro" id="IPR012340">
    <property type="entry name" value="NA-bd_OB-fold"/>
</dbReference>
<dbReference type="InterPro" id="IPR014722">
    <property type="entry name" value="Rib_uL2_dom2"/>
</dbReference>
<dbReference type="InterPro" id="IPR002171">
    <property type="entry name" value="Ribosomal_uL2"/>
</dbReference>
<dbReference type="InterPro" id="IPR005880">
    <property type="entry name" value="Ribosomal_uL2_bac/org-type"/>
</dbReference>
<dbReference type="InterPro" id="IPR022669">
    <property type="entry name" value="Ribosomal_uL2_C"/>
</dbReference>
<dbReference type="InterPro" id="IPR022671">
    <property type="entry name" value="Ribosomal_uL2_CS"/>
</dbReference>
<dbReference type="InterPro" id="IPR014726">
    <property type="entry name" value="Ribosomal_uL2_dom3"/>
</dbReference>
<dbReference type="InterPro" id="IPR022666">
    <property type="entry name" value="Ribosomal_uL2_RNA-bd_dom"/>
</dbReference>
<dbReference type="InterPro" id="IPR008991">
    <property type="entry name" value="Translation_prot_SH3-like_sf"/>
</dbReference>
<dbReference type="NCBIfam" id="TIGR01171">
    <property type="entry name" value="rplB_bact"/>
    <property type="match status" value="1"/>
</dbReference>
<dbReference type="PANTHER" id="PTHR13691:SF5">
    <property type="entry name" value="LARGE RIBOSOMAL SUBUNIT PROTEIN UL2M"/>
    <property type="match status" value="1"/>
</dbReference>
<dbReference type="PANTHER" id="PTHR13691">
    <property type="entry name" value="RIBOSOMAL PROTEIN L2"/>
    <property type="match status" value="1"/>
</dbReference>
<dbReference type="Pfam" id="PF00181">
    <property type="entry name" value="Ribosomal_L2"/>
    <property type="match status" value="1"/>
</dbReference>
<dbReference type="Pfam" id="PF03947">
    <property type="entry name" value="Ribosomal_L2_C"/>
    <property type="match status" value="1"/>
</dbReference>
<dbReference type="PIRSF" id="PIRSF002158">
    <property type="entry name" value="Ribosomal_L2"/>
    <property type="match status" value="1"/>
</dbReference>
<dbReference type="SMART" id="SM01383">
    <property type="entry name" value="Ribosomal_L2"/>
    <property type="match status" value="1"/>
</dbReference>
<dbReference type="SMART" id="SM01382">
    <property type="entry name" value="Ribosomal_L2_C"/>
    <property type="match status" value="1"/>
</dbReference>
<dbReference type="SUPFAM" id="SSF50249">
    <property type="entry name" value="Nucleic acid-binding proteins"/>
    <property type="match status" value="1"/>
</dbReference>
<dbReference type="SUPFAM" id="SSF50104">
    <property type="entry name" value="Translation proteins SH3-like domain"/>
    <property type="match status" value="1"/>
</dbReference>
<dbReference type="PROSITE" id="PS00467">
    <property type="entry name" value="RIBOSOMAL_L2"/>
    <property type="match status" value="1"/>
</dbReference>
<organism>
    <name type="scientific">Clostridium botulinum (strain Alaska E43 / Type E3)</name>
    <dbReference type="NCBI Taxonomy" id="508767"/>
    <lineage>
        <taxon>Bacteria</taxon>
        <taxon>Bacillati</taxon>
        <taxon>Bacillota</taxon>
        <taxon>Clostridia</taxon>
        <taxon>Eubacteriales</taxon>
        <taxon>Clostridiaceae</taxon>
        <taxon>Clostridium</taxon>
    </lineage>
</organism>
<name>RL2_CLOBA</name>
<comment type="function">
    <text evidence="1">One of the primary rRNA binding proteins. Required for association of the 30S and 50S subunits to form the 70S ribosome, for tRNA binding and peptide bond formation. It has been suggested to have peptidyltransferase activity; this is somewhat controversial. Makes several contacts with the 16S rRNA in the 70S ribosome.</text>
</comment>
<comment type="subunit">
    <text evidence="1">Part of the 50S ribosomal subunit. Forms a bridge to the 30S subunit in the 70S ribosome.</text>
</comment>
<comment type="similarity">
    <text evidence="1">Belongs to the universal ribosomal protein uL2 family.</text>
</comment>
<keyword id="KW-0687">Ribonucleoprotein</keyword>
<keyword id="KW-0689">Ribosomal protein</keyword>
<keyword id="KW-0694">RNA-binding</keyword>
<keyword id="KW-0699">rRNA-binding</keyword>
<reference key="1">
    <citation type="submission" date="2008-05" db="EMBL/GenBank/DDBJ databases">
        <title>Complete genome sequence of Clostridium botulinum E3 str. Alaska E43.</title>
        <authorList>
            <person name="Brinkac L.M."/>
            <person name="Brown J.L."/>
            <person name="Bruce D."/>
            <person name="Detter C."/>
            <person name="Munk C."/>
            <person name="Smith L.A."/>
            <person name="Smith T.J."/>
            <person name="Sutton G."/>
            <person name="Brettin T.S."/>
        </authorList>
    </citation>
    <scope>NUCLEOTIDE SEQUENCE [LARGE SCALE GENOMIC DNA]</scope>
    <source>
        <strain>Alaska E43 / Type E3</strain>
    </source>
</reference>
<gene>
    <name evidence="1" type="primary">rplB</name>
    <name type="ordered locus">CLH_0240</name>
</gene>
<accession>B2UYB3</accession>